<comment type="similarity">
    <text evidence="2">Belongs to the CSN12 family.</text>
</comment>
<organism>
    <name type="scientific">Debaryomyces hansenii (strain ATCC 36239 / CBS 767 / BCRC 21394 / JCM 1990 / NBRC 0083 / IGC 2968)</name>
    <name type="common">Yeast</name>
    <name type="synonym">Torulaspora hansenii</name>
    <dbReference type="NCBI Taxonomy" id="284592"/>
    <lineage>
        <taxon>Eukaryota</taxon>
        <taxon>Fungi</taxon>
        <taxon>Dikarya</taxon>
        <taxon>Ascomycota</taxon>
        <taxon>Saccharomycotina</taxon>
        <taxon>Pichiomycetes</taxon>
        <taxon>Debaryomycetaceae</taxon>
        <taxon>Debaryomyces</taxon>
    </lineage>
</organism>
<feature type="chain" id="PRO_0000121040" description="Protein CSN12 homolog">
    <location>
        <begin position="1"/>
        <end position="438"/>
    </location>
</feature>
<feature type="domain" description="PCI" evidence="1">
    <location>
        <begin position="226"/>
        <end position="431"/>
    </location>
</feature>
<name>CSN12_DEBHA</name>
<keyword id="KW-1185">Reference proteome</keyword>
<reference key="1">
    <citation type="journal article" date="2004" name="Nature">
        <title>Genome evolution in yeasts.</title>
        <authorList>
            <person name="Dujon B."/>
            <person name="Sherman D."/>
            <person name="Fischer G."/>
            <person name="Durrens P."/>
            <person name="Casaregola S."/>
            <person name="Lafontaine I."/>
            <person name="de Montigny J."/>
            <person name="Marck C."/>
            <person name="Neuveglise C."/>
            <person name="Talla E."/>
            <person name="Goffard N."/>
            <person name="Frangeul L."/>
            <person name="Aigle M."/>
            <person name="Anthouard V."/>
            <person name="Babour A."/>
            <person name="Barbe V."/>
            <person name="Barnay S."/>
            <person name="Blanchin S."/>
            <person name="Beckerich J.-M."/>
            <person name="Beyne E."/>
            <person name="Bleykasten C."/>
            <person name="Boisrame A."/>
            <person name="Boyer J."/>
            <person name="Cattolico L."/>
            <person name="Confanioleri F."/>
            <person name="de Daruvar A."/>
            <person name="Despons L."/>
            <person name="Fabre E."/>
            <person name="Fairhead C."/>
            <person name="Ferry-Dumazet H."/>
            <person name="Groppi A."/>
            <person name="Hantraye F."/>
            <person name="Hennequin C."/>
            <person name="Jauniaux N."/>
            <person name="Joyet P."/>
            <person name="Kachouri R."/>
            <person name="Kerrest A."/>
            <person name="Koszul R."/>
            <person name="Lemaire M."/>
            <person name="Lesur I."/>
            <person name="Ma L."/>
            <person name="Muller H."/>
            <person name="Nicaud J.-M."/>
            <person name="Nikolski M."/>
            <person name="Oztas S."/>
            <person name="Ozier-Kalogeropoulos O."/>
            <person name="Pellenz S."/>
            <person name="Potier S."/>
            <person name="Richard G.-F."/>
            <person name="Straub M.-L."/>
            <person name="Suleau A."/>
            <person name="Swennen D."/>
            <person name="Tekaia F."/>
            <person name="Wesolowski-Louvel M."/>
            <person name="Westhof E."/>
            <person name="Wirth B."/>
            <person name="Zeniou-Meyer M."/>
            <person name="Zivanovic Y."/>
            <person name="Bolotin-Fukuhara M."/>
            <person name="Thierry A."/>
            <person name="Bouchier C."/>
            <person name="Caudron B."/>
            <person name="Scarpelli C."/>
            <person name="Gaillardin C."/>
            <person name="Weissenbach J."/>
            <person name="Wincker P."/>
            <person name="Souciet J.-L."/>
        </authorList>
    </citation>
    <scope>NUCLEOTIDE SEQUENCE [LARGE SCALE GENOMIC DNA]</scope>
    <source>
        <strain>ATCC 36239 / CBS 767 / BCRC 21394 / JCM 1990 / NBRC 0083 / IGC 2968</strain>
    </source>
</reference>
<accession>Q6BGR7</accession>
<sequence>MNTPLSDYIQKVCLSVNLEDSQKFRSCITINPGINEGTIRAHFPEPNDFDLHPIPEKFRNVVKSYLKLMKSVYIANSINASFFDLNEMVNNLNRAADTQTNWINQPLINACTELISVYQVRSKNFPEEEEMELSNLENNEYGNSSSSLERLAATINGSFKLSLNDKNLDLSQSKRLDIYFFLGNLIKIYFKLGKLELAKSVEKALKGTRFNLPKLNGAGSSKRYAVTYLYYSALLSLDDADFTTSEEKLVKAMEILSCYKDPKNVKNQTEKILIILLPLKLYNKRLTPSNEIWEKFPKLKFMYKDNLFDAIKNGNLKKFDQALTKYQLILLKNHLYLLFEMMKSLCYLKLVKKTVSIIHSLNSETKSHIVPLSAIQLALEFSTNDSYKESDKFAYNLDAVECILANLISSGKIKGYLSHANRCIVLSKANAFPSLEYK</sequence>
<gene>
    <name type="primary">CSN12</name>
    <name type="ordered locus">DEHA2G24442g</name>
</gene>
<dbReference type="EMBL" id="CR382139">
    <property type="protein sequence ID" value="CAG91119.2"/>
    <property type="molecule type" value="Genomic_DNA"/>
</dbReference>
<dbReference type="RefSeq" id="XP_462604.2">
    <property type="nucleotide sequence ID" value="XM_462604.1"/>
</dbReference>
<dbReference type="SMR" id="Q6BGR7"/>
<dbReference type="FunCoup" id="Q6BGR7">
    <property type="interactions" value="945"/>
</dbReference>
<dbReference type="STRING" id="284592.Q6BGR7"/>
<dbReference type="GeneID" id="2905566"/>
<dbReference type="KEGG" id="dha:DEHA2G24442g"/>
<dbReference type="VEuPathDB" id="FungiDB:DEHA2G24442g"/>
<dbReference type="eggNOG" id="KOG2688">
    <property type="taxonomic scope" value="Eukaryota"/>
</dbReference>
<dbReference type="HOGENOM" id="CLU_031567_2_1_1"/>
<dbReference type="InParanoid" id="Q6BGR7"/>
<dbReference type="OMA" id="ESQTNWI"/>
<dbReference type="OrthoDB" id="10252687at2759"/>
<dbReference type="Proteomes" id="UP000000599">
    <property type="component" value="Chromosome G"/>
</dbReference>
<dbReference type="GO" id="GO:0003690">
    <property type="term" value="F:double-stranded DNA binding"/>
    <property type="evidence" value="ECO:0007669"/>
    <property type="project" value="InterPro"/>
</dbReference>
<dbReference type="GO" id="GO:0003723">
    <property type="term" value="F:RNA binding"/>
    <property type="evidence" value="ECO:0007669"/>
    <property type="project" value="InterPro"/>
</dbReference>
<dbReference type="Gene3D" id="1.10.10.10">
    <property type="entry name" value="Winged helix-like DNA-binding domain superfamily/Winged helix DNA-binding domain"/>
    <property type="match status" value="1"/>
</dbReference>
<dbReference type="InterPro" id="IPR045114">
    <property type="entry name" value="Csn12-like"/>
</dbReference>
<dbReference type="InterPro" id="IPR000717">
    <property type="entry name" value="PCI_dom"/>
</dbReference>
<dbReference type="InterPro" id="IPR036388">
    <property type="entry name" value="WH-like_DNA-bd_sf"/>
</dbReference>
<dbReference type="PANTHER" id="PTHR12732:SF0">
    <property type="entry name" value="PCI DOMAIN-CONTAINING PROTEIN 2"/>
    <property type="match status" value="1"/>
</dbReference>
<dbReference type="PANTHER" id="PTHR12732">
    <property type="entry name" value="UNCHARACTERIZED PROTEASOME COMPONENT REGION PCI-CONTAINING"/>
    <property type="match status" value="1"/>
</dbReference>
<dbReference type="Pfam" id="PF01399">
    <property type="entry name" value="PCI"/>
    <property type="match status" value="1"/>
</dbReference>
<dbReference type="SMART" id="SM00753">
    <property type="entry name" value="PAM"/>
    <property type="match status" value="1"/>
</dbReference>
<dbReference type="PROSITE" id="PS50250">
    <property type="entry name" value="PCI"/>
    <property type="match status" value="1"/>
</dbReference>
<evidence type="ECO:0000255" key="1">
    <source>
        <dbReference type="PROSITE-ProRule" id="PRU01185"/>
    </source>
</evidence>
<evidence type="ECO:0000305" key="2"/>
<proteinExistence type="inferred from homology"/>
<protein>
    <recommendedName>
        <fullName>Protein CSN12 homolog</fullName>
    </recommendedName>
</protein>